<dbReference type="EMBL" id="X15045">
    <property type="protein sequence ID" value="CAA33147.1"/>
    <property type="status" value="ALT_INIT"/>
    <property type="molecule type" value="Genomic_DNA"/>
</dbReference>
<dbReference type="SMR" id="P20758"/>
<dbReference type="FunCoup" id="P20758">
    <property type="interactions" value="455"/>
</dbReference>
<dbReference type="GlyCosmos" id="P20758">
    <property type="glycosylation" value="2 sites, No reported glycans"/>
</dbReference>
<dbReference type="eggNOG" id="ENOG502R54U">
    <property type="taxonomic scope" value="Eukaryota"/>
</dbReference>
<dbReference type="InParanoid" id="P20758"/>
<dbReference type="Proteomes" id="UP000001519">
    <property type="component" value="Unplaced"/>
</dbReference>
<dbReference type="GO" id="GO:0042571">
    <property type="term" value="C:immunoglobulin complex, circulating"/>
    <property type="evidence" value="ECO:0000318"/>
    <property type="project" value="GO_Central"/>
</dbReference>
<dbReference type="GO" id="GO:0003823">
    <property type="term" value="F:antigen binding"/>
    <property type="evidence" value="ECO:0000318"/>
    <property type="project" value="GO_Central"/>
</dbReference>
<dbReference type="GO" id="GO:0034987">
    <property type="term" value="F:immunoglobulin receptor binding"/>
    <property type="evidence" value="ECO:0000318"/>
    <property type="project" value="GO_Central"/>
</dbReference>
<dbReference type="GO" id="GO:0019731">
    <property type="term" value="P:antibacterial humoral response"/>
    <property type="evidence" value="ECO:0000318"/>
    <property type="project" value="GO_Central"/>
</dbReference>
<dbReference type="GO" id="GO:0006958">
    <property type="term" value="P:complement activation, classical pathway"/>
    <property type="evidence" value="ECO:0000318"/>
    <property type="project" value="GO_Central"/>
</dbReference>
<dbReference type="CDD" id="cd21818">
    <property type="entry name" value="IgC1_CH1_IgA"/>
    <property type="match status" value="1"/>
</dbReference>
<dbReference type="CDD" id="cd04986">
    <property type="entry name" value="IgC1_CH2_IgA"/>
    <property type="match status" value="1"/>
</dbReference>
<dbReference type="CDD" id="cd05768">
    <property type="entry name" value="IgC1_CH3_IgAGD_CH4_IgAEM"/>
    <property type="match status" value="1"/>
</dbReference>
<dbReference type="FunFam" id="2.60.40.10:FF:002016">
    <property type="entry name" value="Immunoglobulin heavy constant alpha 2"/>
    <property type="match status" value="1"/>
</dbReference>
<dbReference type="FunFam" id="2.60.40.10:FF:000998">
    <property type="entry name" value="Immunoglobulin heavy constant epsilon"/>
    <property type="match status" value="1"/>
</dbReference>
<dbReference type="FunFam" id="2.60.40.10:FF:000463">
    <property type="entry name" value="Immunoglobulin heavy constant gamma 1"/>
    <property type="match status" value="1"/>
</dbReference>
<dbReference type="Gene3D" id="2.60.40.10">
    <property type="entry name" value="Immunoglobulins"/>
    <property type="match status" value="3"/>
</dbReference>
<dbReference type="InterPro" id="IPR007110">
    <property type="entry name" value="Ig-like_dom"/>
</dbReference>
<dbReference type="InterPro" id="IPR036179">
    <property type="entry name" value="Ig-like_dom_sf"/>
</dbReference>
<dbReference type="InterPro" id="IPR013783">
    <property type="entry name" value="Ig-like_fold"/>
</dbReference>
<dbReference type="InterPro" id="IPR003006">
    <property type="entry name" value="Ig/MHC_CS"/>
</dbReference>
<dbReference type="InterPro" id="IPR003597">
    <property type="entry name" value="Ig_C1-set"/>
</dbReference>
<dbReference type="InterPro" id="IPR050380">
    <property type="entry name" value="Immune_Resp_Modulators"/>
</dbReference>
<dbReference type="InterPro" id="IPR013151">
    <property type="entry name" value="Immunoglobulin_dom"/>
</dbReference>
<dbReference type="PANTHER" id="PTHR23411">
    <property type="entry name" value="TAPASIN"/>
    <property type="match status" value="1"/>
</dbReference>
<dbReference type="Pfam" id="PF07654">
    <property type="entry name" value="C1-set"/>
    <property type="match status" value="2"/>
</dbReference>
<dbReference type="Pfam" id="PF00047">
    <property type="entry name" value="ig"/>
    <property type="match status" value="1"/>
</dbReference>
<dbReference type="SMART" id="SM00407">
    <property type="entry name" value="IGc1"/>
    <property type="match status" value="2"/>
</dbReference>
<dbReference type="SUPFAM" id="SSF48726">
    <property type="entry name" value="Immunoglobulin"/>
    <property type="match status" value="3"/>
</dbReference>
<dbReference type="PROSITE" id="PS50835">
    <property type="entry name" value="IG_LIKE"/>
    <property type="match status" value="3"/>
</dbReference>
<dbReference type="PROSITE" id="PS00290">
    <property type="entry name" value="IG_MHC"/>
    <property type="match status" value="1"/>
</dbReference>
<comment type="function">
    <text evidence="1">Ig alpha is the major immunoglobulin class in body secretions. It may serve both to defend against local infection and to prevent access of foreign antigens to the general immunologic system (By similarity).</text>
</comment>
<comment type="subunit">
    <text evidence="1">Monomeric or polymeric.</text>
</comment>
<comment type="PTM">
    <text evidence="1">3-Hydroxykynurenine, an oxidized tryptophan metabolite that is common in biological fluids, reacts with alpha-1-microglobulin to form heterogeneous polycyclic chromophores including hydroxanthommatin. The chromophore reacts with accessible cysteines forming non-reducible thioether cross-links with Ig alpha-1 chain C region Cys-352 (By similarity).</text>
</comment>
<comment type="sequence caution" evidence="5">
    <conflict type="erroneous initiation">
        <sequence resource="EMBL-CDS" id="CAA33147"/>
    </conflict>
</comment>
<reference key="1">
    <citation type="journal article" date="1989" name="Nucleic Acids Res.">
        <title>Nucleotide sequence of the gorilla immunoglobulin alpha 1 gene.</title>
        <authorList>
            <person name="Kawamura S."/>
            <person name="Omoto K."/>
            <person name="Ueda S."/>
        </authorList>
    </citation>
    <scope>NUCLEOTIDE SEQUENCE [GENOMIC DNA]</scope>
    <source>
        <tissue>Lymph node</tissue>
    </source>
</reference>
<protein>
    <recommendedName>
        <fullName>Ig alpha-1 chain C region</fullName>
    </recommendedName>
</protein>
<evidence type="ECO:0000250" key="1"/>
<evidence type="ECO:0000255" key="2"/>
<evidence type="ECO:0000255" key="3">
    <source>
        <dbReference type="PROSITE-ProRule" id="PRU00114"/>
    </source>
</evidence>
<evidence type="ECO:0000256" key="4">
    <source>
        <dbReference type="SAM" id="MobiDB-lite"/>
    </source>
</evidence>
<evidence type="ECO:0000305" key="5"/>
<feature type="chain" id="PRO_0000153565" description="Ig alpha-1 chain C region">
    <location>
        <begin position="1" status="less than"/>
        <end position="353"/>
    </location>
</feature>
<feature type="domain" description="Ig-like 1">
    <location>
        <begin position="6"/>
        <end position="98"/>
    </location>
</feature>
<feature type="domain" description="Ig-like 2">
    <location>
        <begin position="125"/>
        <end position="220"/>
    </location>
</feature>
<feature type="domain" description="Ig-like 3">
    <location>
        <begin position="228"/>
        <end position="330"/>
    </location>
</feature>
<feature type="region of interest" description="Disordered" evidence="4">
    <location>
        <begin position="96"/>
        <end position="121"/>
    </location>
</feature>
<feature type="compositionally biased region" description="Pro residues" evidence="4">
    <location>
        <begin position="105"/>
        <end position="121"/>
    </location>
</feature>
<feature type="binding site" description="covalent; in form alpha-1-microglobulin complex" evidence="1">
    <location>
        <position position="352"/>
    </location>
    <ligand>
        <name>3-hydroxy-L-kynurenine</name>
        <dbReference type="ChEBI" id="CHEBI:58125"/>
        <note>multimeric 3-hydroxykynurenine chromophore</note>
    </ligand>
</feature>
<feature type="glycosylation site" description="N-linked (GlcNAc...) asparagine" evidence="2">
    <location>
        <position position="144"/>
    </location>
</feature>
<feature type="glycosylation site" description="N-linked (GlcNAc...) asparagine" evidence="2">
    <location>
        <position position="340"/>
    </location>
</feature>
<feature type="disulfide bond" description="Interchain (with light chain)" evidence="3">
    <location>
        <position position="14"/>
    </location>
</feature>
<feature type="disulfide bond" evidence="3">
    <location>
        <begin position="26"/>
        <end position="85"/>
    </location>
</feature>
<feature type="disulfide bond" evidence="3">
    <location>
        <begin position="77"/>
        <end position="101"/>
    </location>
</feature>
<feature type="disulfide bond" description="Interchain (with heavy chain)" evidence="3">
    <location>
        <position position="122"/>
    </location>
</feature>
<feature type="disulfide bond" description="Or C-123 with C-182" evidence="3">
    <location>
        <begin position="123"/>
        <end position="180"/>
    </location>
</feature>
<feature type="disulfide bond" evidence="3">
    <location>
        <begin position="147"/>
        <end position="204"/>
    </location>
</feature>
<feature type="disulfide bond" description="Interchain (with heavy chain) (or with C-180)">
    <location>
        <position position="182"/>
    </location>
</feature>
<feature type="disulfide bond" description="Interchain (with heavy chain of another subunit)" evidence="3">
    <location>
        <position position="192"/>
    </location>
</feature>
<feature type="disulfide bond" evidence="3">
    <location>
        <begin position="250"/>
        <end position="313"/>
    </location>
</feature>
<feature type="disulfide bond" description="Interchain (with J chain); in oligomeric form" evidence="3">
    <location>
        <position position="352"/>
    </location>
</feature>
<feature type="non-terminal residue">
    <location>
        <position position="1"/>
    </location>
</feature>
<sequence>ASPTSPKVFPLSLCSTQPDGDVVVACLVQGFFPQEPLSVTWSESGQGVTARNFPPSQDASGDLYTTSSQLTLPATQCPDGKSVTCHVNHYTNPSQDVTVPCRVPSTPPTPSPSTPPTPSPPCCHPRLSLHRPALEDLLLGSEANLTCTLTGLRDASGVTFTWTPSSGKSAVEGPPERDLCGCYSVSSVLPGCAEPWNHGKTFTCTAAYPESKTPLTATLSKSGNMFRPEVHLLPPPSEELALNELVTLTCLARGFSPKDVLVRWLQGSQELPREKYLTWASRQEPSQGTTTFAVTSILRVAAEDWKKGDTFSCMVGHEALPLAFTQKTIDRLAGKPTHVNVSVVMAEVDGTCY</sequence>
<accession>P20758</accession>
<organism>
    <name type="scientific">Gorilla gorilla gorilla</name>
    <name type="common">Western lowland gorilla</name>
    <dbReference type="NCBI Taxonomy" id="9595"/>
    <lineage>
        <taxon>Eukaryota</taxon>
        <taxon>Metazoa</taxon>
        <taxon>Chordata</taxon>
        <taxon>Craniata</taxon>
        <taxon>Vertebrata</taxon>
        <taxon>Euteleostomi</taxon>
        <taxon>Mammalia</taxon>
        <taxon>Eutheria</taxon>
        <taxon>Euarchontoglires</taxon>
        <taxon>Primates</taxon>
        <taxon>Haplorrhini</taxon>
        <taxon>Catarrhini</taxon>
        <taxon>Hominidae</taxon>
        <taxon>Gorilla</taxon>
    </lineage>
</organism>
<proteinExistence type="evidence at protein level"/>
<name>IGHA1_GORGO</name>
<gene>
    <name type="primary">IGHA1</name>
</gene>
<keyword id="KW-0157">Chromophore</keyword>
<keyword id="KW-1015">Disulfide bond</keyword>
<keyword id="KW-0325">Glycoprotein</keyword>
<keyword id="KW-0393">Immunoglobulin domain</keyword>
<keyword id="KW-1185">Reference proteome</keyword>
<keyword id="KW-0677">Repeat</keyword>